<feature type="chain" id="PRO_0000242280" description="Phosphomethylpyrimidine synthase">
    <location>
        <begin position="1"/>
        <end position="626"/>
    </location>
</feature>
<feature type="region of interest" description="Disordered" evidence="2">
    <location>
        <begin position="92"/>
        <end position="117"/>
    </location>
</feature>
<feature type="compositionally biased region" description="Basic and acidic residues" evidence="2">
    <location>
        <begin position="92"/>
        <end position="106"/>
    </location>
</feature>
<feature type="binding site" evidence="1">
    <location>
        <position position="219"/>
    </location>
    <ligand>
        <name>substrate</name>
    </ligand>
</feature>
<feature type="binding site" evidence="1">
    <location>
        <position position="248"/>
    </location>
    <ligand>
        <name>substrate</name>
    </ligand>
</feature>
<feature type="binding site" evidence="1">
    <location>
        <position position="277"/>
    </location>
    <ligand>
        <name>substrate</name>
    </ligand>
</feature>
<feature type="binding site" evidence="1">
    <location>
        <position position="313"/>
    </location>
    <ligand>
        <name>substrate</name>
    </ligand>
</feature>
<feature type="binding site" evidence="1">
    <location>
        <begin position="333"/>
        <end position="335"/>
    </location>
    <ligand>
        <name>substrate</name>
    </ligand>
</feature>
<feature type="binding site" evidence="1">
    <location>
        <begin position="374"/>
        <end position="377"/>
    </location>
    <ligand>
        <name>substrate</name>
    </ligand>
</feature>
<feature type="binding site" evidence="1">
    <location>
        <position position="413"/>
    </location>
    <ligand>
        <name>substrate</name>
    </ligand>
</feature>
<feature type="binding site" evidence="1">
    <location>
        <position position="417"/>
    </location>
    <ligand>
        <name>Zn(2+)</name>
        <dbReference type="ChEBI" id="CHEBI:29105"/>
    </ligand>
</feature>
<feature type="binding site" evidence="1">
    <location>
        <position position="440"/>
    </location>
    <ligand>
        <name>substrate</name>
    </ligand>
</feature>
<feature type="binding site" evidence="1">
    <location>
        <position position="481"/>
    </location>
    <ligand>
        <name>Zn(2+)</name>
        <dbReference type="ChEBI" id="CHEBI:29105"/>
    </ligand>
</feature>
<feature type="binding site" evidence="1">
    <location>
        <position position="561"/>
    </location>
    <ligand>
        <name>[4Fe-4S] cluster</name>
        <dbReference type="ChEBI" id="CHEBI:49883"/>
        <note>4Fe-4S-S-AdoMet</note>
    </ligand>
</feature>
<feature type="binding site" evidence="1">
    <location>
        <position position="564"/>
    </location>
    <ligand>
        <name>[4Fe-4S] cluster</name>
        <dbReference type="ChEBI" id="CHEBI:49883"/>
        <note>4Fe-4S-S-AdoMet</note>
    </ligand>
</feature>
<feature type="binding site" evidence="1">
    <location>
        <position position="569"/>
    </location>
    <ligand>
        <name>[4Fe-4S] cluster</name>
        <dbReference type="ChEBI" id="CHEBI:49883"/>
        <note>4Fe-4S-S-AdoMet</note>
    </ligand>
</feature>
<dbReference type="EC" id="4.1.99.17" evidence="1"/>
<dbReference type="EMBL" id="CP000248">
    <property type="protein sequence ID" value="ABD26264.1"/>
    <property type="molecule type" value="Genomic_DNA"/>
</dbReference>
<dbReference type="RefSeq" id="WP_011445474.1">
    <property type="nucleotide sequence ID" value="NC_007794.1"/>
</dbReference>
<dbReference type="SMR" id="Q2G7A9"/>
<dbReference type="STRING" id="279238.Saro_1824"/>
<dbReference type="KEGG" id="nar:Saro_1824"/>
<dbReference type="eggNOG" id="COG0422">
    <property type="taxonomic scope" value="Bacteria"/>
</dbReference>
<dbReference type="HOGENOM" id="CLU_013181_2_1_5"/>
<dbReference type="UniPathway" id="UPA00060"/>
<dbReference type="Proteomes" id="UP000009134">
    <property type="component" value="Chromosome"/>
</dbReference>
<dbReference type="GO" id="GO:0005829">
    <property type="term" value="C:cytosol"/>
    <property type="evidence" value="ECO:0007669"/>
    <property type="project" value="TreeGrafter"/>
</dbReference>
<dbReference type="GO" id="GO:0051539">
    <property type="term" value="F:4 iron, 4 sulfur cluster binding"/>
    <property type="evidence" value="ECO:0007669"/>
    <property type="project" value="UniProtKB-KW"/>
</dbReference>
<dbReference type="GO" id="GO:0016830">
    <property type="term" value="F:carbon-carbon lyase activity"/>
    <property type="evidence" value="ECO:0007669"/>
    <property type="project" value="InterPro"/>
</dbReference>
<dbReference type="GO" id="GO:0008270">
    <property type="term" value="F:zinc ion binding"/>
    <property type="evidence" value="ECO:0007669"/>
    <property type="project" value="UniProtKB-UniRule"/>
</dbReference>
<dbReference type="GO" id="GO:0009228">
    <property type="term" value="P:thiamine biosynthetic process"/>
    <property type="evidence" value="ECO:0007669"/>
    <property type="project" value="UniProtKB-KW"/>
</dbReference>
<dbReference type="GO" id="GO:0009229">
    <property type="term" value="P:thiamine diphosphate biosynthetic process"/>
    <property type="evidence" value="ECO:0007669"/>
    <property type="project" value="UniProtKB-UniRule"/>
</dbReference>
<dbReference type="FunFam" id="3.20.20.540:FF:000001">
    <property type="entry name" value="Phosphomethylpyrimidine synthase"/>
    <property type="match status" value="1"/>
</dbReference>
<dbReference type="Gene3D" id="6.10.250.620">
    <property type="match status" value="1"/>
</dbReference>
<dbReference type="Gene3D" id="3.20.20.540">
    <property type="entry name" value="Radical SAM ThiC family, central domain"/>
    <property type="match status" value="1"/>
</dbReference>
<dbReference type="HAMAP" id="MF_00089">
    <property type="entry name" value="ThiC"/>
    <property type="match status" value="1"/>
</dbReference>
<dbReference type="InterPro" id="IPR037509">
    <property type="entry name" value="ThiC"/>
</dbReference>
<dbReference type="InterPro" id="IPR025747">
    <property type="entry name" value="ThiC-associated_dom"/>
</dbReference>
<dbReference type="InterPro" id="IPR038521">
    <property type="entry name" value="ThiC/Bza_core_dom"/>
</dbReference>
<dbReference type="InterPro" id="IPR002817">
    <property type="entry name" value="ThiC/BzaA/B"/>
</dbReference>
<dbReference type="NCBIfam" id="NF006763">
    <property type="entry name" value="PRK09284.1"/>
    <property type="match status" value="1"/>
</dbReference>
<dbReference type="NCBIfam" id="NF009895">
    <property type="entry name" value="PRK13352.1"/>
    <property type="match status" value="1"/>
</dbReference>
<dbReference type="NCBIfam" id="TIGR00190">
    <property type="entry name" value="thiC"/>
    <property type="match status" value="1"/>
</dbReference>
<dbReference type="PANTHER" id="PTHR30557:SF1">
    <property type="entry name" value="PHOSPHOMETHYLPYRIMIDINE SYNTHASE, CHLOROPLASTIC"/>
    <property type="match status" value="1"/>
</dbReference>
<dbReference type="PANTHER" id="PTHR30557">
    <property type="entry name" value="THIAMINE BIOSYNTHESIS PROTEIN THIC"/>
    <property type="match status" value="1"/>
</dbReference>
<dbReference type="Pfam" id="PF13667">
    <property type="entry name" value="ThiC-associated"/>
    <property type="match status" value="1"/>
</dbReference>
<dbReference type="Pfam" id="PF01964">
    <property type="entry name" value="ThiC_Rad_SAM"/>
    <property type="match status" value="1"/>
</dbReference>
<dbReference type="SFLD" id="SFLDF00407">
    <property type="entry name" value="phosphomethylpyrimidine_syntha"/>
    <property type="match status" value="1"/>
</dbReference>
<dbReference type="SFLD" id="SFLDG01114">
    <property type="entry name" value="phosphomethylpyrimidine_syntha"/>
    <property type="match status" value="1"/>
</dbReference>
<dbReference type="SFLD" id="SFLDS00113">
    <property type="entry name" value="Radical_SAM_Phosphomethylpyrim"/>
    <property type="match status" value="1"/>
</dbReference>
<accession>Q2G7A9</accession>
<reference key="1">
    <citation type="submission" date="2006-01" db="EMBL/GenBank/DDBJ databases">
        <title>Complete sequence of Novosphingobium aromaticivorans DSM 12444.</title>
        <authorList>
            <consortium name="US DOE Joint Genome Institute"/>
            <person name="Copeland A."/>
            <person name="Lucas S."/>
            <person name="Lapidus A."/>
            <person name="Barry K."/>
            <person name="Detter J.C."/>
            <person name="Glavina T."/>
            <person name="Hammon N."/>
            <person name="Israni S."/>
            <person name="Pitluck S."/>
            <person name="Chain P."/>
            <person name="Malfatti S."/>
            <person name="Shin M."/>
            <person name="Vergez L."/>
            <person name="Schmutz J."/>
            <person name="Larimer F."/>
            <person name="Land M."/>
            <person name="Kyrpides N."/>
            <person name="Ivanova N."/>
            <person name="Fredrickson J."/>
            <person name="Balkwill D."/>
            <person name="Romine M.F."/>
            <person name="Richardson P."/>
        </authorList>
    </citation>
    <scope>NUCLEOTIDE SEQUENCE [LARGE SCALE GENOMIC DNA]</scope>
    <source>
        <strain>ATCC 700278 / DSM 12444 / CCUG 56034 / CIP 105152 / NBRC 16084 / F199</strain>
    </source>
</reference>
<keyword id="KW-0004">4Fe-4S</keyword>
<keyword id="KW-0408">Iron</keyword>
<keyword id="KW-0411">Iron-sulfur</keyword>
<keyword id="KW-0456">Lyase</keyword>
<keyword id="KW-0479">Metal-binding</keyword>
<keyword id="KW-1185">Reference proteome</keyword>
<keyword id="KW-0949">S-adenosyl-L-methionine</keyword>
<keyword id="KW-0784">Thiamine biosynthesis</keyword>
<keyword id="KW-0862">Zinc</keyword>
<sequence>MADINSKLEIGVTTGPIRGSRKIHVESARFPGLTVAMREIQLEPSSGEPPVRVYDTSGPYTDPKVTIDIAAGLPTLRRDWIMARGDVEEYDAREVKPEDNGLKGPDRSAGVPPFPNVVKRPLRAKAGQNVSQMHYARRGIITPEMEYVAIRENLGRKQAKEAMIRDGQDWGASIPDYVTPEFVRDEVARGRAIIPSNINHPESEPMAIGRNFLVKINANIGNSAVASDVASEVDKMVWSIRWGADTVMDLSTGRNIHDTREWILRNSPVPIGTVPIYQALEKVGGVAEDLTWEVFRDTLIEQAEQGVDYFTIHAGVRLPYIPLAAKRMTGIVSRGGSIMAKWCLAHHKESFLYENFDEITEIMKAYDVAYSLGDGLRPGSIYDANDEAQFAELYTLGELTKRAWEQDVQVMIEGPGHVPMHKIKENMTKQLEACGEAPFYTLGPLVTDIAPGYDHITSGIGAAQIGWYGTAMLCYVTPKEHLGLPDRDDVKVGVVTYKLAAHAADLAKGHPAAQARDDALSKARFEFRWRDQFNLSLDPETAEQYHDQTLPAEGAKTAHFCSMCGPKFCSMKISQEVRDFAAKQNAGIETFVANEAEAEAGMKAMSDKYDEMGRELYIGAGGREHD</sequence>
<name>THIC_NOVAD</name>
<comment type="function">
    <text evidence="1">Catalyzes the synthesis of the hydroxymethylpyrimidine phosphate (HMP-P) moiety of thiamine from aminoimidazole ribotide (AIR) in a radical S-adenosyl-L-methionine (SAM)-dependent reaction.</text>
</comment>
<comment type="catalytic activity">
    <reaction evidence="1">
        <text>5-amino-1-(5-phospho-beta-D-ribosyl)imidazole + S-adenosyl-L-methionine = 4-amino-2-methyl-5-(phosphooxymethyl)pyrimidine + CO + 5'-deoxyadenosine + formate + L-methionine + 3 H(+)</text>
        <dbReference type="Rhea" id="RHEA:24840"/>
        <dbReference type="ChEBI" id="CHEBI:15378"/>
        <dbReference type="ChEBI" id="CHEBI:15740"/>
        <dbReference type="ChEBI" id="CHEBI:17245"/>
        <dbReference type="ChEBI" id="CHEBI:17319"/>
        <dbReference type="ChEBI" id="CHEBI:57844"/>
        <dbReference type="ChEBI" id="CHEBI:58354"/>
        <dbReference type="ChEBI" id="CHEBI:59789"/>
        <dbReference type="ChEBI" id="CHEBI:137981"/>
        <dbReference type="EC" id="4.1.99.17"/>
    </reaction>
</comment>
<comment type="cofactor">
    <cofactor evidence="1">
        <name>[4Fe-4S] cluster</name>
        <dbReference type="ChEBI" id="CHEBI:49883"/>
    </cofactor>
    <text evidence="1">Binds 1 [4Fe-4S] cluster per subunit. The cluster is coordinated with 3 cysteines and an exchangeable S-adenosyl-L-methionine.</text>
</comment>
<comment type="pathway">
    <text evidence="1">Cofactor biosynthesis; thiamine diphosphate biosynthesis.</text>
</comment>
<comment type="subunit">
    <text evidence="1">Homodimer.</text>
</comment>
<comment type="similarity">
    <text evidence="1">Belongs to the ThiC family.</text>
</comment>
<gene>
    <name evidence="1" type="primary">thiC</name>
    <name type="ordered locus">Saro_1824</name>
</gene>
<organism>
    <name type="scientific">Novosphingobium aromaticivorans (strain ATCC 700278 / DSM 12444 / CCUG 56034 / CIP 105152 / NBRC 16084 / F199)</name>
    <dbReference type="NCBI Taxonomy" id="279238"/>
    <lineage>
        <taxon>Bacteria</taxon>
        <taxon>Pseudomonadati</taxon>
        <taxon>Pseudomonadota</taxon>
        <taxon>Alphaproteobacteria</taxon>
        <taxon>Sphingomonadales</taxon>
        <taxon>Sphingomonadaceae</taxon>
        <taxon>Novosphingobium</taxon>
    </lineage>
</organism>
<evidence type="ECO:0000255" key="1">
    <source>
        <dbReference type="HAMAP-Rule" id="MF_00089"/>
    </source>
</evidence>
<evidence type="ECO:0000256" key="2">
    <source>
        <dbReference type="SAM" id="MobiDB-lite"/>
    </source>
</evidence>
<proteinExistence type="inferred from homology"/>
<protein>
    <recommendedName>
        <fullName evidence="1">Phosphomethylpyrimidine synthase</fullName>
        <ecNumber evidence="1">4.1.99.17</ecNumber>
    </recommendedName>
    <alternativeName>
        <fullName evidence="1">Hydroxymethylpyrimidine phosphate synthase</fullName>
        <shortName evidence="1">HMP-P synthase</shortName>
        <shortName evidence="1">HMP-phosphate synthase</shortName>
        <shortName evidence="1">HMPP synthase</shortName>
    </alternativeName>
    <alternativeName>
        <fullName evidence="1">Thiamine biosynthesis protein ThiC</fullName>
    </alternativeName>
</protein>